<accession>Q88F25</accession>
<comment type="function">
    <text evidence="1">DNA ligase that catalyzes the formation of phosphodiester linkages between 5'-phosphoryl and 3'-hydroxyl groups in double-stranded DNA using NAD as a coenzyme and as the energy source for the reaction. It is essential for DNA replication and repair of damaged DNA.</text>
</comment>
<comment type="catalytic activity">
    <reaction evidence="1">
        <text>NAD(+) + (deoxyribonucleotide)n-3'-hydroxyl + 5'-phospho-(deoxyribonucleotide)m = (deoxyribonucleotide)n+m + AMP + beta-nicotinamide D-nucleotide.</text>
        <dbReference type="EC" id="6.5.1.2"/>
    </reaction>
</comment>
<comment type="cofactor">
    <cofactor evidence="1">
        <name>Mg(2+)</name>
        <dbReference type="ChEBI" id="CHEBI:18420"/>
    </cofactor>
    <cofactor evidence="1">
        <name>Mn(2+)</name>
        <dbReference type="ChEBI" id="CHEBI:29035"/>
    </cofactor>
</comment>
<comment type="similarity">
    <text evidence="1">Belongs to the NAD-dependent DNA ligase family. LigA subfamily.</text>
</comment>
<gene>
    <name evidence="1" type="primary">ligA</name>
    <name type="ordered locus">PP_4274</name>
</gene>
<organism>
    <name type="scientific">Pseudomonas putida (strain ATCC 47054 / DSM 6125 / CFBP 8728 / NCIMB 11950 / KT2440)</name>
    <dbReference type="NCBI Taxonomy" id="160488"/>
    <lineage>
        <taxon>Bacteria</taxon>
        <taxon>Pseudomonadati</taxon>
        <taxon>Pseudomonadota</taxon>
        <taxon>Gammaproteobacteria</taxon>
        <taxon>Pseudomonadales</taxon>
        <taxon>Pseudomonadaceae</taxon>
        <taxon>Pseudomonas</taxon>
    </lineage>
</organism>
<protein>
    <recommendedName>
        <fullName evidence="1">DNA ligase</fullName>
        <ecNumber evidence="1">6.5.1.2</ecNumber>
    </recommendedName>
    <alternativeName>
        <fullName evidence="1">Polydeoxyribonucleotide synthase [NAD(+)]</fullName>
    </alternativeName>
</protein>
<dbReference type="EC" id="6.5.1.2" evidence="1"/>
<dbReference type="EMBL" id="AE015451">
    <property type="protein sequence ID" value="AAN69854.1"/>
    <property type="molecule type" value="Genomic_DNA"/>
</dbReference>
<dbReference type="RefSeq" id="NP_746390.1">
    <property type="nucleotide sequence ID" value="NC_002947.4"/>
</dbReference>
<dbReference type="RefSeq" id="WP_010955019.1">
    <property type="nucleotide sequence ID" value="NZ_CP169744.1"/>
</dbReference>
<dbReference type="SMR" id="Q88F25"/>
<dbReference type="STRING" id="160488.PP_4274"/>
<dbReference type="PaxDb" id="160488-PP_4274"/>
<dbReference type="GeneID" id="83679017"/>
<dbReference type="KEGG" id="ppu:PP_4274"/>
<dbReference type="PATRIC" id="fig|160488.4.peg.4544"/>
<dbReference type="eggNOG" id="COG0272">
    <property type="taxonomic scope" value="Bacteria"/>
</dbReference>
<dbReference type="HOGENOM" id="CLU_007764_2_1_6"/>
<dbReference type="OrthoDB" id="9759736at2"/>
<dbReference type="PhylomeDB" id="Q88F25"/>
<dbReference type="BioCyc" id="PPUT160488:G1G01-4552-MONOMER"/>
<dbReference type="Proteomes" id="UP000000556">
    <property type="component" value="Chromosome"/>
</dbReference>
<dbReference type="GO" id="GO:0005829">
    <property type="term" value="C:cytosol"/>
    <property type="evidence" value="ECO:0007669"/>
    <property type="project" value="TreeGrafter"/>
</dbReference>
<dbReference type="GO" id="GO:0003677">
    <property type="term" value="F:DNA binding"/>
    <property type="evidence" value="ECO:0007669"/>
    <property type="project" value="InterPro"/>
</dbReference>
<dbReference type="GO" id="GO:0003911">
    <property type="term" value="F:DNA ligase (NAD+) activity"/>
    <property type="evidence" value="ECO:0007669"/>
    <property type="project" value="UniProtKB-UniRule"/>
</dbReference>
<dbReference type="GO" id="GO:0046872">
    <property type="term" value="F:metal ion binding"/>
    <property type="evidence" value="ECO:0007669"/>
    <property type="project" value="UniProtKB-KW"/>
</dbReference>
<dbReference type="GO" id="GO:0006281">
    <property type="term" value="P:DNA repair"/>
    <property type="evidence" value="ECO:0007669"/>
    <property type="project" value="UniProtKB-KW"/>
</dbReference>
<dbReference type="GO" id="GO:0006260">
    <property type="term" value="P:DNA replication"/>
    <property type="evidence" value="ECO:0007669"/>
    <property type="project" value="UniProtKB-KW"/>
</dbReference>
<dbReference type="CDD" id="cd17748">
    <property type="entry name" value="BRCT_DNA_ligase_like"/>
    <property type="match status" value="1"/>
</dbReference>
<dbReference type="CDD" id="cd00114">
    <property type="entry name" value="LIGANc"/>
    <property type="match status" value="1"/>
</dbReference>
<dbReference type="FunFam" id="1.10.150.20:FF:000006">
    <property type="entry name" value="DNA ligase"/>
    <property type="match status" value="1"/>
</dbReference>
<dbReference type="FunFam" id="1.10.150.20:FF:000007">
    <property type="entry name" value="DNA ligase"/>
    <property type="match status" value="1"/>
</dbReference>
<dbReference type="FunFam" id="1.10.287.610:FF:000002">
    <property type="entry name" value="DNA ligase"/>
    <property type="match status" value="1"/>
</dbReference>
<dbReference type="FunFam" id="2.40.50.140:FF:000012">
    <property type="entry name" value="DNA ligase"/>
    <property type="match status" value="1"/>
</dbReference>
<dbReference type="FunFam" id="3.30.470.30:FF:000001">
    <property type="entry name" value="DNA ligase"/>
    <property type="match status" value="1"/>
</dbReference>
<dbReference type="Gene3D" id="6.20.10.30">
    <property type="match status" value="1"/>
</dbReference>
<dbReference type="Gene3D" id="1.10.150.20">
    <property type="entry name" value="5' to 3' exonuclease, C-terminal subdomain"/>
    <property type="match status" value="3"/>
</dbReference>
<dbReference type="Gene3D" id="3.40.50.10190">
    <property type="entry name" value="BRCT domain"/>
    <property type="match status" value="1"/>
</dbReference>
<dbReference type="Gene3D" id="3.30.470.30">
    <property type="entry name" value="DNA ligase/mRNA capping enzyme"/>
    <property type="match status" value="1"/>
</dbReference>
<dbReference type="Gene3D" id="1.10.287.610">
    <property type="entry name" value="Helix hairpin bin"/>
    <property type="match status" value="1"/>
</dbReference>
<dbReference type="Gene3D" id="2.40.50.140">
    <property type="entry name" value="Nucleic acid-binding proteins"/>
    <property type="match status" value="1"/>
</dbReference>
<dbReference type="HAMAP" id="MF_01588">
    <property type="entry name" value="DNA_ligase_A"/>
    <property type="match status" value="1"/>
</dbReference>
<dbReference type="InterPro" id="IPR001357">
    <property type="entry name" value="BRCT_dom"/>
</dbReference>
<dbReference type="InterPro" id="IPR036420">
    <property type="entry name" value="BRCT_dom_sf"/>
</dbReference>
<dbReference type="InterPro" id="IPR041663">
    <property type="entry name" value="DisA/LigA_HHH"/>
</dbReference>
<dbReference type="InterPro" id="IPR001679">
    <property type="entry name" value="DNA_ligase"/>
</dbReference>
<dbReference type="InterPro" id="IPR018239">
    <property type="entry name" value="DNA_ligase_AS"/>
</dbReference>
<dbReference type="InterPro" id="IPR033136">
    <property type="entry name" value="DNA_ligase_CS"/>
</dbReference>
<dbReference type="InterPro" id="IPR013839">
    <property type="entry name" value="DNAligase_adenylation"/>
</dbReference>
<dbReference type="InterPro" id="IPR013840">
    <property type="entry name" value="DNAligase_N"/>
</dbReference>
<dbReference type="InterPro" id="IPR003583">
    <property type="entry name" value="Hlx-hairpin-Hlx_DNA-bd_motif"/>
</dbReference>
<dbReference type="InterPro" id="IPR012340">
    <property type="entry name" value="NA-bd_OB-fold"/>
</dbReference>
<dbReference type="InterPro" id="IPR004150">
    <property type="entry name" value="NAD_DNA_ligase_OB"/>
</dbReference>
<dbReference type="InterPro" id="IPR010994">
    <property type="entry name" value="RuvA_2-like"/>
</dbReference>
<dbReference type="NCBIfam" id="TIGR00575">
    <property type="entry name" value="dnlj"/>
    <property type="match status" value="1"/>
</dbReference>
<dbReference type="NCBIfam" id="NF005932">
    <property type="entry name" value="PRK07956.1"/>
    <property type="match status" value="1"/>
</dbReference>
<dbReference type="PANTHER" id="PTHR23389">
    <property type="entry name" value="CHROMOSOME TRANSMISSION FIDELITY FACTOR 18"/>
    <property type="match status" value="1"/>
</dbReference>
<dbReference type="PANTHER" id="PTHR23389:SF9">
    <property type="entry name" value="DNA LIGASE"/>
    <property type="match status" value="1"/>
</dbReference>
<dbReference type="Pfam" id="PF00533">
    <property type="entry name" value="BRCT"/>
    <property type="match status" value="1"/>
</dbReference>
<dbReference type="Pfam" id="PF01653">
    <property type="entry name" value="DNA_ligase_aden"/>
    <property type="match status" value="1"/>
</dbReference>
<dbReference type="Pfam" id="PF03120">
    <property type="entry name" value="DNA_ligase_OB"/>
    <property type="match status" value="1"/>
</dbReference>
<dbReference type="Pfam" id="PF12826">
    <property type="entry name" value="HHH_2"/>
    <property type="match status" value="1"/>
</dbReference>
<dbReference type="Pfam" id="PF22745">
    <property type="entry name" value="Nlig-Ia"/>
    <property type="match status" value="1"/>
</dbReference>
<dbReference type="PIRSF" id="PIRSF001604">
    <property type="entry name" value="LigA"/>
    <property type="match status" value="1"/>
</dbReference>
<dbReference type="SMART" id="SM00292">
    <property type="entry name" value="BRCT"/>
    <property type="match status" value="1"/>
</dbReference>
<dbReference type="SMART" id="SM00278">
    <property type="entry name" value="HhH1"/>
    <property type="match status" value="3"/>
</dbReference>
<dbReference type="SMART" id="SM00532">
    <property type="entry name" value="LIGANc"/>
    <property type="match status" value="1"/>
</dbReference>
<dbReference type="SUPFAM" id="SSF52113">
    <property type="entry name" value="BRCT domain"/>
    <property type="match status" value="1"/>
</dbReference>
<dbReference type="SUPFAM" id="SSF56091">
    <property type="entry name" value="DNA ligase/mRNA capping enzyme, catalytic domain"/>
    <property type="match status" value="1"/>
</dbReference>
<dbReference type="SUPFAM" id="SSF50249">
    <property type="entry name" value="Nucleic acid-binding proteins"/>
    <property type="match status" value="1"/>
</dbReference>
<dbReference type="SUPFAM" id="SSF47781">
    <property type="entry name" value="RuvA domain 2-like"/>
    <property type="match status" value="2"/>
</dbReference>
<dbReference type="PROSITE" id="PS50172">
    <property type="entry name" value="BRCT"/>
    <property type="match status" value="1"/>
</dbReference>
<dbReference type="PROSITE" id="PS01055">
    <property type="entry name" value="DNA_LIGASE_N1"/>
    <property type="match status" value="1"/>
</dbReference>
<dbReference type="PROSITE" id="PS01056">
    <property type="entry name" value="DNA_LIGASE_N2"/>
    <property type="match status" value="1"/>
</dbReference>
<sequence>MTAETRILELRAELDQHNYRYYVLDEPSVPDAEYDRLFNELKALEAEHPHLVTPDSPTQRVGGAALAAFSQVRHEVPMLSLGNAFEEADLREFGRRVVEGLDQPGAVDYSCEPKLDGLAVSLLYRDGQLVQGATRGDGTTGEDISANVRTVRNIPLKLQGKGWPAVLEVRGEVYMSKAGFDRLNAAQAEAGGKTFANPRNAAAGSLRQLDSKITASRPLEFCCYGVGQVSESIGDSHIGILEQLKAWGLPISRELKHAAGIEECLAYYRDIGERRNSLPYEIDGVVFKVNSLAAQRELGFRAREPRWAIAHKFPAMEELTEVLDVEFQVGRTGAVTPVARLKPVKVAGVTVSNATLHNMDEIARLGLRIGDTVIIRRAGDVIPQVMQVVLERRPQGARPVEVPSACPVCGSQVERTRLVKRSKGKETTSEGAVYRCVGRLACGAQLKQAIIHYVSRRAMDIDGLGEKSVEQLVDEGLIGSPADLYKLQFEQVVGLEGFAEVSTQKLLDAIEASKRPSLARFIYALGIPDVGEETAKVLARSLGSLARVQQALPQVLTYLPDIGLEVAYEIHNFFEDEHNQKVIQQLLDSGMQLQDEGELAAEFAASTTLAGMIAKLDIASVGPTGAEKLVARLDSLDKIIAADGIDLRQALAAKQADAVREFFKDEANQKLARDIEAQLLAFGMHWSSEKKVAEGLPLAGQTWVLTGTLERMSRDIAKDKLESLGAKVAGSVSGKTHCVVAGPGAGSKLAKAAELGVKVLDEDAFVTFLAEQGIAV</sequence>
<feature type="chain" id="PRO_0000313378" description="DNA ligase">
    <location>
        <begin position="1"/>
        <end position="776"/>
    </location>
</feature>
<feature type="domain" description="BRCT" evidence="1">
    <location>
        <begin position="693"/>
        <end position="776"/>
    </location>
</feature>
<feature type="active site" description="N6-AMP-lysine intermediate" evidence="1">
    <location>
        <position position="114"/>
    </location>
</feature>
<feature type="binding site" evidence="1">
    <location>
        <begin position="31"/>
        <end position="35"/>
    </location>
    <ligand>
        <name>NAD(+)</name>
        <dbReference type="ChEBI" id="CHEBI:57540"/>
    </ligand>
</feature>
<feature type="binding site" evidence="1">
    <location>
        <begin position="80"/>
        <end position="81"/>
    </location>
    <ligand>
        <name>NAD(+)</name>
        <dbReference type="ChEBI" id="CHEBI:57540"/>
    </ligand>
</feature>
<feature type="binding site" evidence="1">
    <location>
        <position position="112"/>
    </location>
    <ligand>
        <name>NAD(+)</name>
        <dbReference type="ChEBI" id="CHEBI:57540"/>
    </ligand>
</feature>
<feature type="binding site" evidence="1">
    <location>
        <position position="135"/>
    </location>
    <ligand>
        <name>NAD(+)</name>
        <dbReference type="ChEBI" id="CHEBI:57540"/>
    </ligand>
</feature>
<feature type="binding site" evidence="1">
    <location>
        <position position="172"/>
    </location>
    <ligand>
        <name>NAD(+)</name>
        <dbReference type="ChEBI" id="CHEBI:57540"/>
    </ligand>
</feature>
<feature type="binding site" evidence="1">
    <location>
        <position position="288"/>
    </location>
    <ligand>
        <name>NAD(+)</name>
        <dbReference type="ChEBI" id="CHEBI:57540"/>
    </ligand>
</feature>
<feature type="binding site" evidence="1">
    <location>
        <position position="312"/>
    </location>
    <ligand>
        <name>NAD(+)</name>
        <dbReference type="ChEBI" id="CHEBI:57540"/>
    </ligand>
</feature>
<feature type="binding site" evidence="1">
    <location>
        <position position="406"/>
    </location>
    <ligand>
        <name>Zn(2+)</name>
        <dbReference type="ChEBI" id="CHEBI:29105"/>
    </ligand>
</feature>
<feature type="binding site" evidence="1">
    <location>
        <position position="409"/>
    </location>
    <ligand>
        <name>Zn(2+)</name>
        <dbReference type="ChEBI" id="CHEBI:29105"/>
    </ligand>
</feature>
<feature type="binding site" evidence="1">
    <location>
        <position position="436"/>
    </location>
    <ligand>
        <name>Zn(2+)</name>
        <dbReference type="ChEBI" id="CHEBI:29105"/>
    </ligand>
</feature>
<feature type="binding site" evidence="1">
    <location>
        <position position="442"/>
    </location>
    <ligand>
        <name>Zn(2+)</name>
        <dbReference type="ChEBI" id="CHEBI:29105"/>
    </ligand>
</feature>
<keyword id="KW-0227">DNA damage</keyword>
<keyword id="KW-0234">DNA repair</keyword>
<keyword id="KW-0235">DNA replication</keyword>
<keyword id="KW-0436">Ligase</keyword>
<keyword id="KW-0460">Magnesium</keyword>
<keyword id="KW-0464">Manganese</keyword>
<keyword id="KW-0479">Metal-binding</keyword>
<keyword id="KW-0520">NAD</keyword>
<keyword id="KW-1185">Reference proteome</keyword>
<keyword id="KW-0862">Zinc</keyword>
<name>DNLJ_PSEPK</name>
<proteinExistence type="inferred from homology"/>
<reference key="1">
    <citation type="journal article" date="2002" name="Environ. Microbiol.">
        <title>Complete genome sequence and comparative analysis of the metabolically versatile Pseudomonas putida KT2440.</title>
        <authorList>
            <person name="Nelson K.E."/>
            <person name="Weinel C."/>
            <person name="Paulsen I.T."/>
            <person name="Dodson R.J."/>
            <person name="Hilbert H."/>
            <person name="Martins dos Santos V.A.P."/>
            <person name="Fouts D.E."/>
            <person name="Gill S.R."/>
            <person name="Pop M."/>
            <person name="Holmes M."/>
            <person name="Brinkac L.M."/>
            <person name="Beanan M.J."/>
            <person name="DeBoy R.T."/>
            <person name="Daugherty S.C."/>
            <person name="Kolonay J.F."/>
            <person name="Madupu R."/>
            <person name="Nelson W.C."/>
            <person name="White O."/>
            <person name="Peterson J.D."/>
            <person name="Khouri H.M."/>
            <person name="Hance I."/>
            <person name="Chris Lee P."/>
            <person name="Holtzapple E.K."/>
            <person name="Scanlan D."/>
            <person name="Tran K."/>
            <person name="Moazzez A."/>
            <person name="Utterback T.R."/>
            <person name="Rizzo M."/>
            <person name="Lee K."/>
            <person name="Kosack D."/>
            <person name="Moestl D."/>
            <person name="Wedler H."/>
            <person name="Lauber J."/>
            <person name="Stjepandic D."/>
            <person name="Hoheisel J."/>
            <person name="Straetz M."/>
            <person name="Heim S."/>
            <person name="Kiewitz C."/>
            <person name="Eisen J.A."/>
            <person name="Timmis K.N."/>
            <person name="Duesterhoeft A."/>
            <person name="Tuemmler B."/>
            <person name="Fraser C.M."/>
        </authorList>
    </citation>
    <scope>NUCLEOTIDE SEQUENCE [LARGE SCALE GENOMIC DNA]</scope>
    <source>
        <strain>ATCC 47054 / DSM 6125 / CFBP 8728 / NCIMB 11950 / KT2440</strain>
    </source>
</reference>
<evidence type="ECO:0000255" key="1">
    <source>
        <dbReference type="HAMAP-Rule" id="MF_01588"/>
    </source>
</evidence>